<sequence length="249" mass="28125">MPFEIVFDGAKEFADLIATASNLIDEAAFKITEEGVSMRAMDPSRVVLIDLNLPESIFSKYEVEEPETIGINMDHFKKILKRGKSKDTLILRKGDENFLEITFEGTAKRTFRLPLIDVEELELELPELPFTAKVVLLGEVLKEAIKDASLVSDSLKFIAKEDEFTMKAEGETNEVEIKLTLEDEGLLDLEVEEETRSAYGISYLADMVKGIGKADEVTLRFGTEMPLQMDYFIRDEGKLTFLLAPRVEE</sequence>
<comment type="function">
    <text evidence="1">Sliding clamp subunit that acts as a moving platform for DNA processing. Responsible for tethering the catalytic subunit of DNA polymerase and other proteins to DNA during high-speed replication.</text>
</comment>
<comment type="subunit">
    <text evidence="1">Homotrimer. The subunits circularize to form a toroid; DNA passes through its center. Replication factor C (RFC) is required to load the toroid on the DNA.</text>
</comment>
<comment type="similarity">
    <text evidence="1">Belongs to the PCNA family.</text>
</comment>
<protein>
    <recommendedName>
        <fullName evidence="1">DNA polymerase sliding clamp</fullName>
    </recommendedName>
    <alternativeName>
        <fullName evidence="1">Proliferating cell nuclear antigen homolog</fullName>
        <shortName evidence="1">PCNA</shortName>
    </alternativeName>
</protein>
<reference key="1">
    <citation type="journal article" date="2007" name="Genome Biol.">
        <title>Genome analysis and genome-wide proteomics of Thermococcus gammatolerans, the most radioresistant organism known amongst the Archaea.</title>
        <authorList>
            <person name="Zivanovic Y."/>
            <person name="Armengaud J."/>
            <person name="Lagorce A."/>
            <person name="Leplat C."/>
            <person name="Guerin P."/>
            <person name="Dutertre M."/>
            <person name="Anthouard V."/>
            <person name="Forterre P."/>
            <person name="Wincker P."/>
            <person name="Confalonieri F."/>
        </authorList>
    </citation>
    <scope>NUCLEOTIDE SEQUENCE [LARGE SCALE GENOMIC DNA]</scope>
    <source>
        <strain>DSM 15229 / JCM 11827 / EJ3</strain>
    </source>
</reference>
<evidence type="ECO:0000255" key="1">
    <source>
        <dbReference type="HAMAP-Rule" id="MF_00317"/>
    </source>
</evidence>
<evidence type="ECO:0007829" key="2">
    <source>
        <dbReference type="PDB" id="7N5I"/>
    </source>
</evidence>
<organism>
    <name type="scientific">Thermococcus gammatolerans (strain DSM 15229 / JCM 11827 / EJ3)</name>
    <dbReference type="NCBI Taxonomy" id="593117"/>
    <lineage>
        <taxon>Archaea</taxon>
        <taxon>Methanobacteriati</taxon>
        <taxon>Methanobacteriota</taxon>
        <taxon>Thermococci</taxon>
        <taxon>Thermococcales</taxon>
        <taxon>Thermococcaceae</taxon>
        <taxon>Thermococcus</taxon>
    </lineage>
</organism>
<accession>C5A5N6</accession>
<keyword id="KW-0002">3D-structure</keyword>
<keyword id="KW-0235">DNA replication</keyword>
<keyword id="KW-0238">DNA-binding</keyword>
<keyword id="KW-1185">Reference proteome</keyword>
<proteinExistence type="evidence at protein level"/>
<name>PCNA_THEGJ</name>
<dbReference type="EMBL" id="CP001398">
    <property type="protein sequence ID" value="ACS33548.1"/>
    <property type="molecule type" value="Genomic_DNA"/>
</dbReference>
<dbReference type="RefSeq" id="WP_015858662.1">
    <property type="nucleotide sequence ID" value="NC_012804.1"/>
</dbReference>
<dbReference type="PDB" id="5A6D">
    <property type="method" value="X-ray"/>
    <property type="resolution" value="2.80 A"/>
    <property type="chains" value="A/B=1-249"/>
</dbReference>
<dbReference type="PDB" id="7N5I">
    <property type="method" value="X-ray"/>
    <property type="resolution" value="1.95 A"/>
    <property type="chains" value="A/B/C/D=1-249"/>
</dbReference>
<dbReference type="PDB" id="7N5J">
    <property type="method" value="X-ray"/>
    <property type="resolution" value="2.82 A"/>
    <property type="chains" value="A/B/C/D=1-249"/>
</dbReference>
<dbReference type="PDB" id="7N5K">
    <property type="method" value="X-ray"/>
    <property type="resolution" value="1.98 A"/>
    <property type="chains" value="A/B/C/D=1-249"/>
</dbReference>
<dbReference type="PDB" id="7N5L">
    <property type="method" value="X-ray"/>
    <property type="resolution" value="3.07 A"/>
    <property type="chains" value="A/B/C/D=1-249"/>
</dbReference>
<dbReference type="PDB" id="7N5M">
    <property type="method" value="X-ray"/>
    <property type="resolution" value="2.00 A"/>
    <property type="chains" value="A/B=1-249"/>
</dbReference>
<dbReference type="PDB" id="7N5N">
    <property type="method" value="X-ray"/>
    <property type="resolution" value="2.20 A"/>
    <property type="chains" value="A/B=1-249"/>
</dbReference>
<dbReference type="PDBsum" id="5A6D"/>
<dbReference type="PDBsum" id="7N5I"/>
<dbReference type="PDBsum" id="7N5J"/>
<dbReference type="PDBsum" id="7N5K"/>
<dbReference type="PDBsum" id="7N5L"/>
<dbReference type="PDBsum" id="7N5M"/>
<dbReference type="PDBsum" id="7N5N"/>
<dbReference type="SMR" id="C5A5N6"/>
<dbReference type="STRING" id="593117.TGAM_1046"/>
<dbReference type="PaxDb" id="593117-TGAM_1046"/>
<dbReference type="GeneID" id="7986920"/>
<dbReference type="KEGG" id="tga:TGAM_1046"/>
<dbReference type="PATRIC" id="fig|593117.10.peg.1043"/>
<dbReference type="eggNOG" id="arCOG00488">
    <property type="taxonomic scope" value="Archaea"/>
</dbReference>
<dbReference type="HOGENOM" id="CLU_043978_1_0_2"/>
<dbReference type="OrthoDB" id="14749at2157"/>
<dbReference type="Proteomes" id="UP000001488">
    <property type="component" value="Chromosome"/>
</dbReference>
<dbReference type="GO" id="GO:0003677">
    <property type="term" value="F:DNA binding"/>
    <property type="evidence" value="ECO:0007669"/>
    <property type="project" value="UniProtKB-UniRule"/>
</dbReference>
<dbReference type="GO" id="GO:0030337">
    <property type="term" value="F:DNA polymerase processivity factor activity"/>
    <property type="evidence" value="ECO:0007669"/>
    <property type="project" value="UniProtKB-UniRule"/>
</dbReference>
<dbReference type="GO" id="GO:0006272">
    <property type="term" value="P:leading strand elongation"/>
    <property type="evidence" value="ECO:0007669"/>
    <property type="project" value="TreeGrafter"/>
</dbReference>
<dbReference type="GO" id="GO:0006275">
    <property type="term" value="P:regulation of DNA replication"/>
    <property type="evidence" value="ECO:0007669"/>
    <property type="project" value="UniProtKB-UniRule"/>
</dbReference>
<dbReference type="CDD" id="cd00577">
    <property type="entry name" value="PCNA"/>
    <property type="match status" value="1"/>
</dbReference>
<dbReference type="FunFam" id="3.70.10.10:FF:000038">
    <property type="entry name" value="DNA polymerase sliding clamp 1"/>
    <property type="match status" value="1"/>
</dbReference>
<dbReference type="Gene3D" id="3.70.10.10">
    <property type="match status" value="1"/>
</dbReference>
<dbReference type="HAMAP" id="MF_00317">
    <property type="entry name" value="DNApol_clamp_arch"/>
    <property type="match status" value="1"/>
</dbReference>
<dbReference type="InterPro" id="IPR046938">
    <property type="entry name" value="DNA_clamp_sf"/>
</dbReference>
<dbReference type="InterPro" id="IPR000730">
    <property type="entry name" value="Pr_cel_nuc_antig"/>
</dbReference>
<dbReference type="InterPro" id="IPR022649">
    <property type="entry name" value="Pr_cel_nuc_antig_C"/>
</dbReference>
<dbReference type="InterPro" id="IPR022659">
    <property type="entry name" value="Pr_cel_nuc_antig_CS"/>
</dbReference>
<dbReference type="InterPro" id="IPR022648">
    <property type="entry name" value="Pr_cel_nuc_antig_N"/>
</dbReference>
<dbReference type="NCBIfam" id="TIGR00590">
    <property type="entry name" value="pcna"/>
    <property type="match status" value="1"/>
</dbReference>
<dbReference type="NCBIfam" id="NF002219">
    <property type="entry name" value="PRK01115.1-2"/>
    <property type="match status" value="1"/>
</dbReference>
<dbReference type="NCBIfam" id="NF002221">
    <property type="entry name" value="PRK01115.1-4"/>
    <property type="match status" value="1"/>
</dbReference>
<dbReference type="PANTHER" id="PTHR11352">
    <property type="entry name" value="PROLIFERATING CELL NUCLEAR ANTIGEN"/>
    <property type="match status" value="1"/>
</dbReference>
<dbReference type="PANTHER" id="PTHR11352:SF0">
    <property type="entry name" value="PROLIFERATING CELL NUCLEAR ANTIGEN"/>
    <property type="match status" value="1"/>
</dbReference>
<dbReference type="Pfam" id="PF02747">
    <property type="entry name" value="PCNA_C"/>
    <property type="match status" value="1"/>
</dbReference>
<dbReference type="Pfam" id="PF00705">
    <property type="entry name" value="PCNA_N"/>
    <property type="match status" value="1"/>
</dbReference>
<dbReference type="PRINTS" id="PR00339">
    <property type="entry name" value="PCNACYCLIN"/>
</dbReference>
<dbReference type="SUPFAM" id="SSF55979">
    <property type="entry name" value="DNA clamp"/>
    <property type="match status" value="2"/>
</dbReference>
<dbReference type="PROSITE" id="PS01251">
    <property type="entry name" value="PCNA_1"/>
    <property type="match status" value="1"/>
</dbReference>
<feature type="chain" id="PRO_1000205082" description="DNA polymerase sliding clamp">
    <location>
        <begin position="1"/>
        <end position="249"/>
    </location>
</feature>
<feature type="strand" evidence="2">
    <location>
        <begin position="3"/>
        <end position="8"/>
    </location>
</feature>
<feature type="helix" evidence="2">
    <location>
        <begin position="10"/>
        <end position="21"/>
    </location>
</feature>
<feature type="strand" evidence="2">
    <location>
        <begin position="25"/>
        <end position="32"/>
    </location>
</feature>
<feature type="strand" evidence="2">
    <location>
        <begin position="35"/>
        <end position="41"/>
    </location>
</feature>
<feature type="strand" evidence="2">
    <location>
        <begin position="47"/>
        <end position="54"/>
    </location>
</feature>
<feature type="helix" evidence="2">
    <location>
        <begin position="55"/>
        <end position="57"/>
    </location>
</feature>
<feature type="strand" evidence="2">
    <location>
        <begin position="59"/>
        <end position="65"/>
    </location>
</feature>
<feature type="strand" evidence="2">
    <location>
        <begin position="67"/>
        <end position="72"/>
    </location>
</feature>
<feature type="helix" evidence="2">
    <location>
        <begin position="73"/>
        <end position="80"/>
    </location>
</feature>
<feature type="strand" evidence="2">
    <location>
        <begin position="88"/>
        <end position="93"/>
    </location>
</feature>
<feature type="strand" evidence="2">
    <location>
        <begin position="95"/>
        <end position="114"/>
    </location>
</feature>
<feature type="strand" evidence="2">
    <location>
        <begin position="132"/>
        <end position="137"/>
    </location>
</feature>
<feature type="helix" evidence="2">
    <location>
        <begin position="138"/>
        <end position="149"/>
    </location>
</feature>
<feature type="strand" evidence="2">
    <location>
        <begin position="153"/>
        <end position="159"/>
    </location>
</feature>
<feature type="strand" evidence="2">
    <location>
        <begin position="164"/>
        <end position="169"/>
    </location>
</feature>
<feature type="strand" evidence="2">
    <location>
        <begin position="174"/>
        <end position="179"/>
    </location>
</feature>
<feature type="strand" evidence="2">
    <location>
        <begin position="183"/>
        <end position="193"/>
    </location>
</feature>
<feature type="strand" evidence="2">
    <location>
        <begin position="195"/>
        <end position="200"/>
    </location>
</feature>
<feature type="helix" evidence="2">
    <location>
        <begin position="201"/>
        <end position="208"/>
    </location>
</feature>
<feature type="strand" evidence="2">
    <location>
        <begin position="216"/>
        <end position="221"/>
    </location>
</feature>
<feature type="strand" evidence="2">
    <location>
        <begin position="227"/>
        <end position="233"/>
    </location>
</feature>
<feature type="turn" evidence="2">
    <location>
        <begin position="234"/>
        <end position="236"/>
    </location>
</feature>
<feature type="strand" evidence="2">
    <location>
        <begin position="237"/>
        <end position="243"/>
    </location>
</feature>
<gene>
    <name evidence="1" type="primary">pcn</name>
    <name type="ordered locus">TGAM_1046</name>
</gene>